<dbReference type="EMBL" id="X51467">
    <property type="protein sequence ID" value="CAA35830.1"/>
    <property type="molecule type" value="mRNA"/>
</dbReference>
<dbReference type="PIR" id="S09235">
    <property type="entry name" value="V6EP9A"/>
</dbReference>
<dbReference type="SMR" id="P17696"/>
<dbReference type="GO" id="GO:0005576">
    <property type="term" value="C:extracellular region"/>
    <property type="evidence" value="ECO:0007669"/>
    <property type="project" value="UniProtKB-SubCell"/>
</dbReference>
<dbReference type="GO" id="GO:0090729">
    <property type="term" value="F:toxin activity"/>
    <property type="evidence" value="ECO:0007669"/>
    <property type="project" value="UniProtKB-KW"/>
</dbReference>
<dbReference type="CDD" id="cd00206">
    <property type="entry name" value="TFP_snake_toxin"/>
    <property type="match status" value="1"/>
</dbReference>
<dbReference type="FunFam" id="2.10.60.10:FF:000024">
    <property type="entry name" value="Cytotoxin 1"/>
    <property type="match status" value="1"/>
</dbReference>
<dbReference type="Gene3D" id="2.10.60.10">
    <property type="entry name" value="CD59"/>
    <property type="match status" value="1"/>
</dbReference>
<dbReference type="InterPro" id="IPR003571">
    <property type="entry name" value="Snake_3FTx"/>
</dbReference>
<dbReference type="InterPro" id="IPR045860">
    <property type="entry name" value="Snake_toxin-like_sf"/>
</dbReference>
<dbReference type="InterPro" id="IPR018354">
    <property type="entry name" value="Snake_toxin_con_site"/>
</dbReference>
<dbReference type="InterPro" id="IPR054131">
    <property type="entry name" value="Toxin_cobra-type"/>
</dbReference>
<dbReference type="Pfam" id="PF21947">
    <property type="entry name" value="Toxin_cobra-type"/>
    <property type="match status" value="1"/>
</dbReference>
<dbReference type="SUPFAM" id="SSF57302">
    <property type="entry name" value="Snake toxin-like"/>
    <property type="match status" value="1"/>
</dbReference>
<dbReference type="PROSITE" id="PS00272">
    <property type="entry name" value="SNAKE_TOXIN"/>
    <property type="match status" value="1"/>
</dbReference>
<feature type="signal peptide" evidence="2">
    <location>
        <begin position="1"/>
        <end position="21"/>
    </location>
</feature>
<feature type="chain" id="PRO_0000035467" description="Synergistic-like venom protein">
    <location>
        <begin position="22"/>
        <end position="86"/>
    </location>
</feature>
<feature type="disulfide bond" evidence="1">
    <location>
        <begin position="24"/>
        <end position="45"/>
    </location>
</feature>
<feature type="disulfide bond" evidence="1">
    <location>
        <begin position="38"/>
        <end position="63"/>
    </location>
</feature>
<feature type="disulfide bond" evidence="1">
    <location>
        <begin position="67"/>
        <end position="78"/>
    </location>
</feature>
<feature type="disulfide bond" description="Interchain" evidence="1">
    <location>
        <position position="75"/>
    </location>
</feature>
<feature type="disulfide bond" evidence="1">
    <location>
        <begin position="79"/>
        <end position="84"/>
    </location>
</feature>
<sequence>MKTLLLTLVVVTIVCLDLGYTLTCVTGKSIGGISTEECAAGQKICFKKWTKMGPKLYDVSRGCTATCPKADEYGCVKCCKTDRCNK</sequence>
<organism>
    <name type="scientific">Dendroaspis angusticeps</name>
    <name type="common">Eastern green mamba</name>
    <name type="synonym">Naja angusticeps</name>
    <dbReference type="NCBI Taxonomy" id="8618"/>
    <lineage>
        <taxon>Eukaryota</taxon>
        <taxon>Metazoa</taxon>
        <taxon>Chordata</taxon>
        <taxon>Craniata</taxon>
        <taxon>Vertebrata</taxon>
        <taxon>Euteleostomi</taxon>
        <taxon>Lepidosauria</taxon>
        <taxon>Squamata</taxon>
        <taxon>Bifurcata</taxon>
        <taxon>Unidentata</taxon>
        <taxon>Episquamata</taxon>
        <taxon>Toxicofera</taxon>
        <taxon>Serpentes</taxon>
        <taxon>Colubroidea</taxon>
        <taxon>Elapidae</taxon>
        <taxon>Elapinae</taxon>
        <taxon>Dendroaspis</taxon>
    </lineage>
</organism>
<evidence type="ECO:0000250" key="1">
    <source>
        <dbReference type="UniProtKB" id="P0DQP2"/>
    </source>
</evidence>
<evidence type="ECO:0000255" key="2"/>
<evidence type="ECO:0000305" key="3"/>
<evidence type="ECO:0000305" key="4">
    <source>
    </source>
</evidence>
<reference key="1">
    <citation type="journal article" date="1990" name="Nucleic Acids Res.">
        <title>Nucleotide sequence encoding a 'synergistic-like' protein from the venom glands of Dendroaspis angusticeps.</title>
        <authorList>
            <person name="Rowan E."/>
            <person name="Ducancel F."/>
            <person name="Doljansky Y."/>
            <person name="Harvey A."/>
            <person name="Menez A."/>
            <person name="Boulain J.-C."/>
        </authorList>
    </citation>
    <scope>NUCLEOTIDE SEQUENCE [MRNA]</scope>
    <source>
        <tissue>Venom gland</tissue>
    </source>
</reference>
<protein>
    <recommendedName>
        <fullName>Synergistic-like venom protein</fullName>
    </recommendedName>
</protein>
<proteinExistence type="inferred from homology"/>
<accession>P17696</accession>
<comment type="subcellular location">
    <subcellularLocation>
        <location evidence="4">Secreted</location>
    </subcellularLocation>
</comment>
<comment type="tissue specificity">
    <text evidence="4">Expressed by the venom gland.</text>
</comment>
<comment type="miscellaneous">
    <text evidence="3">Is classified as a P-type cytotoxin, since a proline residue stands at position 54 (Pro-31 in standard classification).</text>
</comment>
<comment type="similarity">
    <text evidence="3">Belongs to the three-finger toxin family. Short-chain subfamily. Aminergic toxin sub-subfamily.</text>
</comment>
<name>3SIYL_DENAN</name>
<keyword id="KW-1015">Disulfide bond</keyword>
<keyword id="KW-0964">Secreted</keyword>
<keyword id="KW-0732">Signal</keyword>
<keyword id="KW-0800">Toxin</keyword>